<comment type="function">
    <text evidence="1">Guanine nucleotide exchange factor (GEF) which may activate RAB3A, a GTPase that regulates synaptic vesicle exocytosis. Promotes the exchange of GDP to GTP, converting inactive GDP-bound Rab proteins into their active GTP-bound form. May also activate RAB8A and RAB8B (By similarity).</text>
</comment>
<comment type="subunit">
    <text evidence="1">Interacts with RAB3A and IHPK1 through the coiled-coil domain. This interaction is competitive. IHPK1 kinase activity is not required for this interaction (By similarity).</text>
</comment>
<comment type="similarity">
    <text evidence="5">Belongs to the SEC2 family.</text>
</comment>
<sequence>MWSGQPHPDEGHPPPLEAVPVPWKSVGPCKSHRESLGGLPETPAGEEAQGEEGPAATQLDVSRLRSSSMEIREKGSEFLKEELHKAQKELKLKDEECERLSKVREQLEQELEELTASLFEEAHKMVREANMKQAASEKQLKEARGKIDMLQAEVTALKTLVITSTPASPNRELHPQLLSPTKAGPRKGHLRHKSTSSALCPAVCPVAGHILTPDKEGKEVDTTLFAEFQAWRESPTLDKTSPFLERVYREDVGPCLDFTMQELSALVRAAVEDNTLTIEPVASQTLPAVKVAAVDCGHTNGFRAPIDTTCALSGLACACRHRIRLGDSESHYYISPSSRARITAVCNFFTYIRYIQQGLVRQDAEPMFWEITRLRKEMSLAKLGFFPHEA</sequence>
<proteinExistence type="evidence at transcript level"/>
<name>R3GEF_BOVIN</name>
<protein>
    <recommendedName>
        <fullName>Guanine nucleotide exchange factor for Rab-3A</fullName>
    </recommendedName>
    <alternativeName>
        <fullName>Rab-3A-interacting-like protein 1</fullName>
        <shortName>Rab3A-interacting-like protein 1</shortName>
    </alternativeName>
    <alternativeName>
        <fullName>Rabin3-like 1</fullName>
    </alternativeName>
</protein>
<feature type="chain" id="PRO_0000305294" description="Guanine nucleotide exchange factor for Rab-3A">
    <location>
        <begin position="1"/>
        <end position="390"/>
    </location>
</feature>
<feature type="region of interest" description="Disordered" evidence="4">
    <location>
        <begin position="1"/>
        <end position="60"/>
    </location>
</feature>
<feature type="region of interest" description="Disordered" evidence="4">
    <location>
        <begin position="166"/>
        <end position="194"/>
    </location>
</feature>
<feature type="coiled-coil region" evidence="3">
    <location>
        <begin position="73"/>
        <end position="161"/>
    </location>
</feature>
<feature type="compositionally biased region" description="Low complexity" evidence="4">
    <location>
        <begin position="40"/>
        <end position="58"/>
    </location>
</feature>
<feature type="compositionally biased region" description="Basic residues" evidence="4">
    <location>
        <begin position="184"/>
        <end position="194"/>
    </location>
</feature>
<feature type="modified residue" description="Phosphoserine" evidence="2">
    <location>
        <position position="168"/>
    </location>
</feature>
<feature type="modified residue" description="Phosphoserine" evidence="2">
    <location>
        <position position="179"/>
    </location>
</feature>
<keyword id="KW-0175">Coiled coil</keyword>
<keyword id="KW-0344">Guanine-nucleotide releasing factor</keyword>
<keyword id="KW-0597">Phosphoprotein</keyword>
<keyword id="KW-0653">Protein transport</keyword>
<keyword id="KW-1185">Reference proteome</keyword>
<keyword id="KW-0813">Transport</keyword>
<organism>
    <name type="scientific">Bos taurus</name>
    <name type="common">Bovine</name>
    <dbReference type="NCBI Taxonomy" id="9913"/>
    <lineage>
        <taxon>Eukaryota</taxon>
        <taxon>Metazoa</taxon>
        <taxon>Chordata</taxon>
        <taxon>Craniata</taxon>
        <taxon>Vertebrata</taxon>
        <taxon>Euteleostomi</taxon>
        <taxon>Mammalia</taxon>
        <taxon>Eutheria</taxon>
        <taxon>Laurasiatheria</taxon>
        <taxon>Artiodactyla</taxon>
        <taxon>Ruminantia</taxon>
        <taxon>Pecora</taxon>
        <taxon>Bovidae</taxon>
        <taxon>Bovinae</taxon>
        <taxon>Bos</taxon>
    </lineage>
</organism>
<dbReference type="EMBL" id="BC105507">
    <property type="protein sequence ID" value="AAI05508.1"/>
    <property type="molecule type" value="mRNA"/>
</dbReference>
<dbReference type="RefSeq" id="NP_001039997.1">
    <property type="nucleotide sequence ID" value="NM_001046532.1"/>
</dbReference>
<dbReference type="SMR" id="Q2KJ58"/>
<dbReference type="FunCoup" id="Q2KJ58">
    <property type="interactions" value="55"/>
</dbReference>
<dbReference type="STRING" id="9913.ENSBTAP00000057789"/>
<dbReference type="PaxDb" id="9913-ENSBTAP00000020909"/>
<dbReference type="GeneID" id="614335"/>
<dbReference type="KEGG" id="bta:614335"/>
<dbReference type="CTD" id="5866"/>
<dbReference type="VEuPathDB" id="HostDB:ENSBTAG00000015745"/>
<dbReference type="eggNOG" id="KOG4324">
    <property type="taxonomic scope" value="Eukaryota"/>
</dbReference>
<dbReference type="HOGENOM" id="CLU_038204_1_0_1"/>
<dbReference type="InParanoid" id="Q2KJ58"/>
<dbReference type="OrthoDB" id="5560525at2759"/>
<dbReference type="TreeFam" id="TF313748"/>
<dbReference type="Reactome" id="R-BTA-8876198">
    <property type="pathway name" value="RAB GEFs exchange GTP for GDP on RABs"/>
</dbReference>
<dbReference type="Proteomes" id="UP000009136">
    <property type="component" value="Chromosome 29"/>
</dbReference>
<dbReference type="Bgee" id="ENSBTAG00000015745">
    <property type="expression patterns" value="Expressed in ureter and 103 other cell types or tissues"/>
</dbReference>
<dbReference type="GO" id="GO:0005085">
    <property type="term" value="F:guanyl-nucleotide exchange factor activity"/>
    <property type="evidence" value="ECO:0000250"/>
    <property type="project" value="UniProtKB"/>
</dbReference>
<dbReference type="GO" id="GO:0015031">
    <property type="term" value="P:protein transport"/>
    <property type="evidence" value="ECO:0007669"/>
    <property type="project" value="UniProtKB-KW"/>
</dbReference>
<dbReference type="FunFam" id="1.20.5.4880:FF:000001">
    <property type="entry name" value="Guanine nucleotide exchange factor for Rab-3A"/>
    <property type="match status" value="1"/>
</dbReference>
<dbReference type="Gene3D" id="1.20.5.4880">
    <property type="match status" value="1"/>
</dbReference>
<dbReference type="InterPro" id="IPR040351">
    <property type="entry name" value="RAB3IL/RAB3IP/Sec2"/>
</dbReference>
<dbReference type="InterPro" id="IPR009449">
    <property type="entry name" value="Sec2_N"/>
</dbReference>
<dbReference type="PANTHER" id="PTHR14430:SF5">
    <property type="entry name" value="GUANINE NUCLEOTIDE EXCHANGE FACTOR FOR RAB-3A"/>
    <property type="match status" value="1"/>
</dbReference>
<dbReference type="PANTHER" id="PTHR14430">
    <property type="entry name" value="RABIN3-RELATED"/>
    <property type="match status" value="1"/>
</dbReference>
<dbReference type="Pfam" id="PF06428">
    <property type="entry name" value="Sec2p"/>
    <property type="match status" value="1"/>
</dbReference>
<dbReference type="SUPFAM" id="SSF144284">
    <property type="entry name" value="Sec2 N-terminal region"/>
    <property type="match status" value="1"/>
</dbReference>
<accession>Q2KJ58</accession>
<gene>
    <name type="primary">RAB3IL1</name>
</gene>
<reference key="1">
    <citation type="submission" date="2005-09" db="EMBL/GenBank/DDBJ databases">
        <authorList>
            <consortium name="NIH - Mammalian Gene Collection (MGC) project"/>
        </authorList>
    </citation>
    <scope>NUCLEOTIDE SEQUENCE [LARGE SCALE MRNA]</scope>
    <source>
        <strain>Hereford</strain>
        <tissue>Uterus</tissue>
    </source>
</reference>
<evidence type="ECO:0000250" key="1"/>
<evidence type="ECO:0000250" key="2">
    <source>
        <dbReference type="UniProtKB" id="Q8TBN0"/>
    </source>
</evidence>
<evidence type="ECO:0000255" key="3"/>
<evidence type="ECO:0000256" key="4">
    <source>
        <dbReference type="SAM" id="MobiDB-lite"/>
    </source>
</evidence>
<evidence type="ECO:0000305" key="5"/>